<proteinExistence type="evidence at transcript level"/>
<protein>
    <recommendedName>
        <fullName>Homeobox-leucine zipper protein ROC2</fullName>
    </recommendedName>
    <alternativeName>
        <fullName>GLABRA 2-like homeobox protein 2</fullName>
    </alternativeName>
    <alternativeName>
        <fullName>HD-ZIP protein ROC2</fullName>
    </alternativeName>
    <alternativeName>
        <fullName>Homeodomain transcription factor ROC2</fullName>
    </alternativeName>
    <alternativeName>
        <fullName>Protein RICE OUTERMOST CELL-SPECIFIC 2</fullName>
    </alternativeName>
</protein>
<reference key="1">
    <citation type="submission" date="2003-01" db="EMBL/GenBank/DDBJ databases">
        <title>The roles of rice GL2-type homeobox genes in epidermis differentiation.</title>
        <authorList>
            <person name="Ito M."/>
            <person name="Sentoku N."/>
            <person name="Nishimura A."/>
            <person name="Hong S.-K."/>
            <person name="Sato Y."/>
            <person name="Matsuoka M."/>
        </authorList>
    </citation>
    <scope>NUCLEOTIDE SEQUENCE [MRNA]</scope>
</reference>
<reference key="2">
    <citation type="journal article" date="2002" name="Nature">
        <title>Sequence and analysis of rice chromosome 4.</title>
        <authorList>
            <person name="Feng Q."/>
            <person name="Zhang Y."/>
            <person name="Hao P."/>
            <person name="Wang S."/>
            <person name="Fu G."/>
            <person name="Huang Y."/>
            <person name="Li Y."/>
            <person name="Zhu J."/>
            <person name="Liu Y."/>
            <person name="Hu X."/>
            <person name="Jia P."/>
            <person name="Zhang Y."/>
            <person name="Zhao Q."/>
            <person name="Ying K."/>
            <person name="Yu S."/>
            <person name="Tang Y."/>
            <person name="Weng Q."/>
            <person name="Zhang L."/>
            <person name="Lu Y."/>
            <person name="Mu J."/>
            <person name="Lu Y."/>
            <person name="Zhang L.S."/>
            <person name="Yu Z."/>
            <person name="Fan D."/>
            <person name="Liu X."/>
            <person name="Lu T."/>
            <person name="Li C."/>
            <person name="Wu Y."/>
            <person name="Sun T."/>
            <person name="Lei H."/>
            <person name="Li T."/>
            <person name="Hu H."/>
            <person name="Guan J."/>
            <person name="Wu M."/>
            <person name="Zhang R."/>
            <person name="Zhou B."/>
            <person name="Chen Z."/>
            <person name="Chen L."/>
            <person name="Jin Z."/>
            <person name="Wang R."/>
            <person name="Yin H."/>
            <person name="Cai Z."/>
            <person name="Ren S."/>
            <person name="Lv G."/>
            <person name="Gu W."/>
            <person name="Zhu G."/>
            <person name="Tu Y."/>
            <person name="Jia J."/>
            <person name="Zhang Y."/>
            <person name="Chen J."/>
            <person name="Kang H."/>
            <person name="Chen X."/>
            <person name="Shao C."/>
            <person name="Sun Y."/>
            <person name="Hu Q."/>
            <person name="Zhang X."/>
            <person name="Zhang W."/>
            <person name="Wang L."/>
            <person name="Ding C."/>
            <person name="Sheng H."/>
            <person name="Gu J."/>
            <person name="Chen S."/>
            <person name="Ni L."/>
            <person name="Zhu F."/>
            <person name="Chen W."/>
            <person name="Lan L."/>
            <person name="Lai Y."/>
            <person name="Cheng Z."/>
            <person name="Gu M."/>
            <person name="Jiang J."/>
            <person name="Li J."/>
            <person name="Hong G."/>
            <person name="Xue Y."/>
            <person name="Han B."/>
        </authorList>
    </citation>
    <scope>NUCLEOTIDE SEQUENCE [LARGE SCALE GENOMIC DNA]</scope>
    <source>
        <strain>cv. Nipponbare</strain>
    </source>
</reference>
<reference key="3">
    <citation type="journal article" date="2005" name="Nature">
        <title>The map-based sequence of the rice genome.</title>
        <authorList>
            <consortium name="International rice genome sequencing project (IRGSP)"/>
        </authorList>
    </citation>
    <scope>NUCLEOTIDE SEQUENCE [LARGE SCALE GENOMIC DNA]</scope>
    <source>
        <strain>cv. Nipponbare</strain>
    </source>
</reference>
<reference key="4">
    <citation type="journal article" date="2008" name="Nucleic Acids Res.">
        <title>The rice annotation project database (RAP-DB): 2008 update.</title>
        <authorList>
            <consortium name="The rice annotation project (RAP)"/>
        </authorList>
    </citation>
    <scope>GENOME REANNOTATION</scope>
    <source>
        <strain>cv. Nipponbare</strain>
    </source>
</reference>
<reference key="5">
    <citation type="journal article" date="2013" name="Rice">
        <title>Improvement of the Oryza sativa Nipponbare reference genome using next generation sequence and optical map data.</title>
        <authorList>
            <person name="Kawahara Y."/>
            <person name="de la Bastide M."/>
            <person name="Hamilton J.P."/>
            <person name="Kanamori H."/>
            <person name="McCombie W.R."/>
            <person name="Ouyang S."/>
            <person name="Schwartz D.C."/>
            <person name="Tanaka T."/>
            <person name="Wu J."/>
            <person name="Zhou S."/>
            <person name="Childs K.L."/>
            <person name="Davidson R.M."/>
            <person name="Lin H."/>
            <person name="Quesada-Ocampo L."/>
            <person name="Vaillancourt B."/>
            <person name="Sakai H."/>
            <person name="Lee S.S."/>
            <person name="Kim J."/>
            <person name="Numa H."/>
            <person name="Itoh T."/>
            <person name="Buell C.R."/>
            <person name="Matsumoto T."/>
        </authorList>
    </citation>
    <scope>GENOME REANNOTATION</scope>
    <source>
        <strain>cv. Nipponbare</strain>
    </source>
</reference>
<gene>
    <name type="primary">ROC2</name>
    <name type="synonym">GL2-2</name>
    <name type="ordered locus">Os04g0627000</name>
    <name type="ordered locus">LOC_Os04g53540</name>
    <name type="ORF">OSJNBb0060E08.16</name>
</gene>
<dbReference type="EMBL" id="AB101645">
    <property type="protein sequence ID" value="BAC77155.1"/>
    <property type="status" value="ALT_INIT"/>
    <property type="molecule type" value="mRNA"/>
</dbReference>
<dbReference type="EMBL" id="AL606669">
    <property type="protein sequence ID" value="CAE04753.3"/>
    <property type="status" value="ALT_SEQ"/>
    <property type="molecule type" value="Genomic_DNA"/>
</dbReference>
<dbReference type="EMBL" id="AP008210">
    <property type="protein sequence ID" value="BAF15865.1"/>
    <property type="molecule type" value="Genomic_DNA"/>
</dbReference>
<dbReference type="EMBL" id="AP014960">
    <property type="status" value="NOT_ANNOTATED_CDS"/>
    <property type="molecule type" value="Genomic_DNA"/>
</dbReference>
<dbReference type="RefSeq" id="XP_015636338.1">
    <property type="nucleotide sequence ID" value="XM_015780852.1"/>
</dbReference>
<dbReference type="RefSeq" id="XP_015636339.1">
    <property type="nucleotide sequence ID" value="XM_015780853.1"/>
</dbReference>
<dbReference type="RefSeq" id="XP_015636340.1">
    <property type="nucleotide sequence ID" value="XM_015780854.1"/>
</dbReference>
<dbReference type="SMR" id="Q0J9X2"/>
<dbReference type="FunCoup" id="Q0J9X2">
    <property type="interactions" value="1554"/>
</dbReference>
<dbReference type="STRING" id="39947.Q0J9X2"/>
<dbReference type="iPTMnet" id="Q0J9X2"/>
<dbReference type="PaxDb" id="39947-Q0J9X2"/>
<dbReference type="KEGG" id="dosa:Os04g0627000"/>
<dbReference type="eggNOG" id="ENOG502QU3P">
    <property type="taxonomic scope" value="Eukaryota"/>
</dbReference>
<dbReference type="HOGENOM" id="CLU_015002_3_2_1"/>
<dbReference type="InParanoid" id="Q0J9X2"/>
<dbReference type="OrthoDB" id="6159439at2759"/>
<dbReference type="Proteomes" id="UP000000763">
    <property type="component" value="Chromosome 4"/>
</dbReference>
<dbReference type="Proteomes" id="UP000059680">
    <property type="component" value="Chromosome 4"/>
</dbReference>
<dbReference type="GO" id="GO:0005634">
    <property type="term" value="C:nucleus"/>
    <property type="evidence" value="ECO:0007669"/>
    <property type="project" value="UniProtKB-SubCell"/>
</dbReference>
<dbReference type="GO" id="GO:0003677">
    <property type="term" value="F:DNA binding"/>
    <property type="evidence" value="ECO:0007669"/>
    <property type="project" value="UniProtKB-KW"/>
</dbReference>
<dbReference type="GO" id="GO:0000981">
    <property type="term" value="F:DNA-binding transcription factor activity, RNA polymerase II-specific"/>
    <property type="evidence" value="ECO:0007669"/>
    <property type="project" value="InterPro"/>
</dbReference>
<dbReference type="GO" id="GO:0008289">
    <property type="term" value="F:lipid binding"/>
    <property type="evidence" value="ECO:0007669"/>
    <property type="project" value="InterPro"/>
</dbReference>
<dbReference type="CDD" id="cd00086">
    <property type="entry name" value="homeodomain"/>
    <property type="match status" value="1"/>
</dbReference>
<dbReference type="CDD" id="cd08875">
    <property type="entry name" value="START_ArGLABRA2_like"/>
    <property type="match status" value="1"/>
</dbReference>
<dbReference type="FunFam" id="3.30.530.20:FF:000026">
    <property type="entry name" value="Homeobox-leucine zipper protein GLABRA 2"/>
    <property type="match status" value="1"/>
</dbReference>
<dbReference type="FunFam" id="1.10.10.60:FF:000229">
    <property type="entry name" value="Homeobox-leucine zipper protein HDG1"/>
    <property type="match status" value="1"/>
</dbReference>
<dbReference type="Gene3D" id="3.30.530.20">
    <property type="match status" value="1"/>
</dbReference>
<dbReference type="Gene3D" id="1.10.10.60">
    <property type="entry name" value="Homeodomain-like"/>
    <property type="match status" value="1"/>
</dbReference>
<dbReference type="InterPro" id="IPR042160">
    <property type="entry name" value="GLABRA2/ANL2/PDF2/ATML1-like"/>
</dbReference>
<dbReference type="InterPro" id="IPR001356">
    <property type="entry name" value="HD"/>
</dbReference>
<dbReference type="InterPro" id="IPR017970">
    <property type="entry name" value="Homeobox_CS"/>
</dbReference>
<dbReference type="InterPro" id="IPR009057">
    <property type="entry name" value="Homeodomain-like_sf"/>
</dbReference>
<dbReference type="InterPro" id="IPR023393">
    <property type="entry name" value="START-like_dom_sf"/>
</dbReference>
<dbReference type="InterPro" id="IPR002913">
    <property type="entry name" value="START_lipid-bd_dom"/>
</dbReference>
<dbReference type="PANTHER" id="PTHR45654">
    <property type="entry name" value="HOMEOBOX-LEUCINE ZIPPER PROTEIN MERISTEM L1"/>
    <property type="match status" value="1"/>
</dbReference>
<dbReference type="PANTHER" id="PTHR45654:SF77">
    <property type="entry name" value="HOMEOBOX-LEUCINE ZIPPER PROTEIN MERISTEM L1"/>
    <property type="match status" value="1"/>
</dbReference>
<dbReference type="Pfam" id="PF00046">
    <property type="entry name" value="Homeodomain"/>
    <property type="match status" value="1"/>
</dbReference>
<dbReference type="Pfam" id="PF01852">
    <property type="entry name" value="START"/>
    <property type="match status" value="1"/>
</dbReference>
<dbReference type="SMART" id="SM00389">
    <property type="entry name" value="HOX"/>
    <property type="match status" value="1"/>
</dbReference>
<dbReference type="SMART" id="SM00234">
    <property type="entry name" value="START"/>
    <property type="match status" value="1"/>
</dbReference>
<dbReference type="SUPFAM" id="SSF55961">
    <property type="entry name" value="Bet v1-like"/>
    <property type="match status" value="2"/>
</dbReference>
<dbReference type="SUPFAM" id="SSF46689">
    <property type="entry name" value="Homeodomain-like"/>
    <property type="match status" value="1"/>
</dbReference>
<dbReference type="PROSITE" id="PS00027">
    <property type="entry name" value="HOMEOBOX_1"/>
    <property type="match status" value="1"/>
</dbReference>
<dbReference type="PROSITE" id="PS50071">
    <property type="entry name" value="HOMEOBOX_2"/>
    <property type="match status" value="1"/>
</dbReference>
<dbReference type="PROSITE" id="PS50848">
    <property type="entry name" value="START"/>
    <property type="match status" value="1"/>
</dbReference>
<evidence type="ECO:0000250" key="1"/>
<evidence type="ECO:0000255" key="2"/>
<evidence type="ECO:0000255" key="3">
    <source>
        <dbReference type="PROSITE-ProRule" id="PRU00108"/>
    </source>
</evidence>
<evidence type="ECO:0000255" key="4">
    <source>
        <dbReference type="PROSITE-ProRule" id="PRU00197"/>
    </source>
</evidence>
<evidence type="ECO:0000256" key="5">
    <source>
        <dbReference type="SAM" id="MobiDB-lite"/>
    </source>
</evidence>
<evidence type="ECO:0000305" key="6"/>
<feature type="chain" id="PRO_0000331738" description="Homeobox-leucine zipper protein ROC2">
    <location>
        <begin position="1"/>
        <end position="784"/>
    </location>
</feature>
<feature type="domain" description="START" evidence="4">
    <location>
        <begin position="286"/>
        <end position="523"/>
    </location>
</feature>
<feature type="DNA-binding region" description="Homeobox" evidence="3">
    <location>
        <begin position="104"/>
        <end position="163"/>
    </location>
</feature>
<feature type="region of interest" description="Disordered" evidence="5">
    <location>
        <begin position="60"/>
        <end position="113"/>
    </location>
</feature>
<feature type="coiled-coil region" evidence="2">
    <location>
        <begin position="158"/>
        <end position="234"/>
    </location>
</feature>
<feature type="compositionally biased region" description="Basic residues" evidence="5">
    <location>
        <begin position="102"/>
        <end position="113"/>
    </location>
</feature>
<feature type="sequence conflict" description="In Ref. 1; BAC77155." evidence="6" ref="1">
    <original>A</original>
    <variation>P</variation>
    <location>
        <position position="299"/>
    </location>
</feature>
<feature type="sequence conflict" description="In Ref. 1; BAC77155." evidence="6" ref="1">
    <original>A</original>
    <variation>V</variation>
    <location>
        <position position="602"/>
    </location>
</feature>
<feature type="sequence conflict" description="In Ref. 1; BAC77155." evidence="6" ref="1">
    <original>P</original>
    <variation>S</variation>
    <location>
        <position position="611"/>
    </location>
</feature>
<feature type="sequence conflict" description="In Ref. 1; BAC77155." evidence="6" ref="1">
    <original>D</original>
    <variation>H</variation>
    <location>
        <position position="616"/>
    </location>
</feature>
<sequence>MMIPARHMPSMIGRNGAAYGSSSALSLSQPNLLDNHQFQQAFQHQQQQHHLLDQIPATTAESGDNMIRSRASDPLGGDEFESKSGSENVDGVSVDDQDPNQRPRKKRYHRHTQHQIQEMEAFFKECPHPDDKQRKELSRELGLEPLQVKFWFQNKRTQMKNQHERHENSQLRSDNEKLRAENMRYKEALSSASCPNCGGPAALGEMSFDEHHLRIENARLREEIDRISAIAAKYVGKPMVPFPVLSNPMAAAASRAPLDLPVAPYGVPGDMFGGGGAGELLRGVQSEVDKPMIVELAVAAMEELVRMAQLDEPLWSVAPPLDATAAAMETLSEEEYARMFPRGLGPKQYGLRSEASRDSAVVIMTHANLVEILMDANQYAAVFSNIVSRAITLEVLSTGVAGNYNGALQVMSVEFQVPSPLVPTRESYFVRYCKQNADGTWAVVDVSLDSLRPSPVLKCRRRPSGCLIQEMPNGYSKVTWVEHVEVDDRSVHNIYKLLVNSGLAFGARRWVGTLDRQCERLASVMASNIPTSDIGVITSSEGRKSMLKLAERMVVSFCGGVTASVAHQWTTLSGSGAEDVRVMTRKSVDDPGRPPGIVLNAATSFWLPVPPKRVFDFLRDESSRSEWDILSNGGIVQEMAHIANGRDQGNCVSLLRVNSSNSNQSNMLILQESCTDASGSYVIYAPVDVVAMNVVLNGGDPDYVALLPSGFAILPDGPAHDGGDGDGGVGVGSGGSLLTVAFQILVDSVPTAKLSLGSVATVNSLIACTVERIKAAVSGESNPQ</sequence>
<keyword id="KW-0175">Coiled coil</keyword>
<keyword id="KW-0238">DNA-binding</keyword>
<keyword id="KW-0371">Homeobox</keyword>
<keyword id="KW-0539">Nucleus</keyword>
<keyword id="KW-1185">Reference proteome</keyword>
<keyword id="KW-0804">Transcription</keyword>
<keyword id="KW-0805">Transcription regulation</keyword>
<name>ROC2_ORYSJ</name>
<comment type="function">
    <text evidence="1">Probable transcription factor.</text>
</comment>
<comment type="subcellular location">
    <subcellularLocation>
        <location evidence="6">Nucleus</location>
    </subcellularLocation>
</comment>
<comment type="similarity">
    <text evidence="6">Belongs to the HD-ZIP homeobox family. Class IV subfamily.</text>
</comment>
<comment type="sequence caution" evidence="6">
    <conflict type="erroneous initiation">
        <sequence resource="EMBL-CDS" id="BAC77155"/>
    </conflict>
</comment>
<comment type="sequence caution" evidence="6">
    <conflict type="erroneous gene model prediction">
        <sequence resource="EMBL-CDS" id="CAE04753"/>
    </conflict>
</comment>
<accession>Q0J9X2</accession>
<accession>Q7XM83</accession>
<accession>Q7Y0W1</accession>
<organism>
    <name type="scientific">Oryza sativa subsp. japonica</name>
    <name type="common">Rice</name>
    <dbReference type="NCBI Taxonomy" id="39947"/>
    <lineage>
        <taxon>Eukaryota</taxon>
        <taxon>Viridiplantae</taxon>
        <taxon>Streptophyta</taxon>
        <taxon>Embryophyta</taxon>
        <taxon>Tracheophyta</taxon>
        <taxon>Spermatophyta</taxon>
        <taxon>Magnoliopsida</taxon>
        <taxon>Liliopsida</taxon>
        <taxon>Poales</taxon>
        <taxon>Poaceae</taxon>
        <taxon>BOP clade</taxon>
        <taxon>Oryzoideae</taxon>
        <taxon>Oryzeae</taxon>
        <taxon>Oryzinae</taxon>
        <taxon>Oryza</taxon>
        <taxon>Oryza sativa</taxon>
    </lineage>
</organism>